<sequence>MSELAEKECVPCKGGVPPLKGEELERLARQLPGWEVVDEHHLRRSFRFRNFREALDFVNRVGELAEEQNHHPDICFGWGRAEITVFTHKIDGLTESDFVFAAKVDRL</sequence>
<name>PHS_RUBXD</name>
<accession>Q1AUE0</accession>
<reference key="1">
    <citation type="submission" date="2006-06" db="EMBL/GenBank/DDBJ databases">
        <title>Complete sequence of Rubrobacter xylanophilus DSM 9941.</title>
        <authorList>
            <consortium name="US DOE Joint Genome Institute"/>
            <person name="Copeland A."/>
            <person name="Lucas S."/>
            <person name="Lapidus A."/>
            <person name="Barry K."/>
            <person name="Detter J.C."/>
            <person name="Glavina del Rio T."/>
            <person name="Hammon N."/>
            <person name="Israni S."/>
            <person name="Dalin E."/>
            <person name="Tice H."/>
            <person name="Pitluck S."/>
            <person name="Munk A.C."/>
            <person name="Brettin T."/>
            <person name="Bruce D."/>
            <person name="Han C."/>
            <person name="Tapia R."/>
            <person name="Gilna P."/>
            <person name="Schmutz J."/>
            <person name="Larimer F."/>
            <person name="Land M."/>
            <person name="Hauser L."/>
            <person name="Kyrpides N."/>
            <person name="Lykidis A."/>
            <person name="da Costa M.S."/>
            <person name="Rainey F.A."/>
            <person name="Empadinhas N."/>
            <person name="Jolivet E."/>
            <person name="Battista J.R."/>
            <person name="Richardson P."/>
        </authorList>
    </citation>
    <scope>NUCLEOTIDE SEQUENCE [LARGE SCALE GENOMIC DNA]</scope>
    <source>
        <strain>DSM 9941 / JCM 11954 / NBRC 16129 / PRD-1</strain>
    </source>
</reference>
<comment type="catalytic activity">
    <reaction evidence="1">
        <text>(4aS,6R)-4a-hydroxy-L-erythro-5,6,7,8-tetrahydrobiopterin = (6R)-L-erythro-6,7-dihydrobiopterin + H2O</text>
        <dbReference type="Rhea" id="RHEA:11920"/>
        <dbReference type="ChEBI" id="CHEBI:15377"/>
        <dbReference type="ChEBI" id="CHEBI:15642"/>
        <dbReference type="ChEBI" id="CHEBI:43120"/>
        <dbReference type="EC" id="4.2.1.96"/>
    </reaction>
</comment>
<comment type="similarity">
    <text evidence="1">Belongs to the pterin-4-alpha-carbinolamine dehydratase family.</text>
</comment>
<proteinExistence type="inferred from homology"/>
<dbReference type="EC" id="4.2.1.96" evidence="1"/>
<dbReference type="EMBL" id="CP000386">
    <property type="protein sequence ID" value="ABG04988.1"/>
    <property type="molecule type" value="Genomic_DNA"/>
</dbReference>
<dbReference type="RefSeq" id="WP_011565003.1">
    <property type="nucleotide sequence ID" value="NC_008148.1"/>
</dbReference>
<dbReference type="SMR" id="Q1AUE0"/>
<dbReference type="STRING" id="266117.Rxyl_2043"/>
<dbReference type="KEGG" id="rxy:Rxyl_2043"/>
<dbReference type="eggNOG" id="COG2154">
    <property type="taxonomic scope" value="Bacteria"/>
</dbReference>
<dbReference type="HOGENOM" id="CLU_081974_2_2_11"/>
<dbReference type="OrthoDB" id="15077at2"/>
<dbReference type="PhylomeDB" id="Q1AUE0"/>
<dbReference type="Proteomes" id="UP000006637">
    <property type="component" value="Chromosome"/>
</dbReference>
<dbReference type="GO" id="GO:0008124">
    <property type="term" value="F:4-alpha-hydroxytetrahydrobiopterin dehydratase activity"/>
    <property type="evidence" value="ECO:0007669"/>
    <property type="project" value="UniProtKB-UniRule"/>
</dbReference>
<dbReference type="GO" id="GO:0006729">
    <property type="term" value="P:tetrahydrobiopterin biosynthetic process"/>
    <property type="evidence" value="ECO:0007669"/>
    <property type="project" value="InterPro"/>
</dbReference>
<dbReference type="CDD" id="cd00913">
    <property type="entry name" value="PCD_DCoH_subfamily_a"/>
    <property type="match status" value="1"/>
</dbReference>
<dbReference type="Gene3D" id="3.30.1360.20">
    <property type="entry name" value="Transcriptional coactivator/pterin dehydratase"/>
    <property type="match status" value="1"/>
</dbReference>
<dbReference type="HAMAP" id="MF_00434">
    <property type="entry name" value="Pterin_4_alpha"/>
    <property type="match status" value="1"/>
</dbReference>
<dbReference type="InterPro" id="IPR036428">
    <property type="entry name" value="PCD_sf"/>
</dbReference>
<dbReference type="InterPro" id="IPR050376">
    <property type="entry name" value="Pterin-4-alpha-carb_dehyd"/>
</dbReference>
<dbReference type="InterPro" id="IPR001533">
    <property type="entry name" value="Pterin_deHydtase"/>
</dbReference>
<dbReference type="NCBIfam" id="NF002017">
    <property type="entry name" value="PRK00823.1-2"/>
    <property type="match status" value="1"/>
</dbReference>
<dbReference type="PANTHER" id="PTHR42805">
    <property type="entry name" value="PTERIN-4-ALPHA-CARBINOLAMINE DEHYDRATASE-RELATED"/>
    <property type="match status" value="1"/>
</dbReference>
<dbReference type="PANTHER" id="PTHR42805:SF1">
    <property type="entry name" value="PTERIN-4-ALPHA-CARBINOLAMINE DEHYDRATASE-RELATED"/>
    <property type="match status" value="1"/>
</dbReference>
<dbReference type="Pfam" id="PF01329">
    <property type="entry name" value="Pterin_4a"/>
    <property type="match status" value="1"/>
</dbReference>
<dbReference type="SUPFAM" id="SSF55248">
    <property type="entry name" value="PCD-like"/>
    <property type="match status" value="1"/>
</dbReference>
<feature type="chain" id="PRO_1000050450" description="Putative pterin-4-alpha-carbinolamine dehydratase">
    <location>
        <begin position="1"/>
        <end position="107"/>
    </location>
</feature>
<gene>
    <name type="ordered locus">Rxyl_2043</name>
</gene>
<keyword id="KW-0456">Lyase</keyword>
<keyword id="KW-1185">Reference proteome</keyword>
<evidence type="ECO:0000255" key="1">
    <source>
        <dbReference type="HAMAP-Rule" id="MF_00434"/>
    </source>
</evidence>
<organism>
    <name type="scientific">Rubrobacter xylanophilus (strain DSM 9941 / JCM 11954 / NBRC 16129 / PRD-1)</name>
    <dbReference type="NCBI Taxonomy" id="266117"/>
    <lineage>
        <taxon>Bacteria</taxon>
        <taxon>Bacillati</taxon>
        <taxon>Actinomycetota</taxon>
        <taxon>Rubrobacteria</taxon>
        <taxon>Rubrobacterales</taxon>
        <taxon>Rubrobacteraceae</taxon>
        <taxon>Rubrobacter</taxon>
    </lineage>
</organism>
<protein>
    <recommendedName>
        <fullName evidence="1">Putative pterin-4-alpha-carbinolamine dehydratase</fullName>
        <shortName evidence="1">PHS</shortName>
        <ecNumber evidence="1">4.2.1.96</ecNumber>
    </recommendedName>
    <alternativeName>
        <fullName evidence="1">4-alpha-hydroxy-tetrahydropterin dehydratase</fullName>
    </alternativeName>
    <alternativeName>
        <fullName evidence="1">Pterin carbinolamine dehydratase</fullName>
        <shortName evidence="1">PCD</shortName>
    </alternativeName>
</protein>